<dbReference type="EC" id="2.1.1.183"/>
<dbReference type="EMBL" id="CR380958">
    <property type="protein sequence ID" value="CAG62081.1"/>
    <property type="molecule type" value="Genomic_DNA"/>
</dbReference>
<dbReference type="RefSeq" id="XP_449111.1">
    <property type="nucleotide sequence ID" value="XM_449111.1"/>
</dbReference>
<dbReference type="SMR" id="Q6FKY3"/>
<dbReference type="FunCoup" id="Q6FKY3">
    <property type="interactions" value="831"/>
</dbReference>
<dbReference type="STRING" id="284593.Q6FKY3"/>
<dbReference type="EnsemblFungi" id="CAGL0L07678g-T">
    <property type="protein sequence ID" value="CAGL0L07678g-T-p1"/>
    <property type="gene ID" value="CAGL0L07678g"/>
</dbReference>
<dbReference type="KEGG" id="cgr:2891000"/>
<dbReference type="CGD" id="CAL0135164">
    <property type="gene designation" value="CAGL0L07678g"/>
</dbReference>
<dbReference type="VEuPathDB" id="FungiDB:B1J91_L07678g"/>
<dbReference type="VEuPathDB" id="FungiDB:CAGL0L07678g"/>
<dbReference type="eggNOG" id="KOG0820">
    <property type="taxonomic scope" value="Eukaryota"/>
</dbReference>
<dbReference type="HOGENOM" id="CLU_041220_2_0_1"/>
<dbReference type="InParanoid" id="Q6FKY3"/>
<dbReference type="OMA" id="ANYRTWC"/>
<dbReference type="Proteomes" id="UP000002428">
    <property type="component" value="Chromosome L"/>
</dbReference>
<dbReference type="GO" id="GO:0005730">
    <property type="term" value="C:nucleolus"/>
    <property type="evidence" value="ECO:0007669"/>
    <property type="project" value="TreeGrafter"/>
</dbReference>
<dbReference type="GO" id="GO:0030688">
    <property type="term" value="C:preribosome, small subunit precursor"/>
    <property type="evidence" value="ECO:0007669"/>
    <property type="project" value="EnsemblFungi"/>
</dbReference>
<dbReference type="GO" id="GO:0052909">
    <property type="term" value="F:18S rRNA (adenine(1779)-N(6)/adenine(1780)-N(6))-dimethyltransferase activity"/>
    <property type="evidence" value="ECO:0007669"/>
    <property type="project" value="UniProtKB-EC"/>
</dbReference>
<dbReference type="GO" id="GO:0003723">
    <property type="term" value="F:RNA binding"/>
    <property type="evidence" value="ECO:0007669"/>
    <property type="project" value="UniProtKB-KW"/>
</dbReference>
<dbReference type="GO" id="GO:0000462">
    <property type="term" value="P:maturation of SSU-rRNA from tricistronic rRNA transcript (SSU-rRNA, 5.8S rRNA, LSU-rRNA)"/>
    <property type="evidence" value="ECO:0007669"/>
    <property type="project" value="EnsemblFungi"/>
</dbReference>
<dbReference type="CDD" id="cd02440">
    <property type="entry name" value="AdoMet_MTases"/>
    <property type="match status" value="1"/>
</dbReference>
<dbReference type="FunFam" id="1.10.8.480:FF:000002">
    <property type="entry name" value="rRNA adenine N(6)-methyltransferase"/>
    <property type="match status" value="1"/>
</dbReference>
<dbReference type="FunFam" id="3.40.50.150:FF:000007">
    <property type="entry name" value="rRNA adenine N(6)-methyltransferase"/>
    <property type="match status" value="1"/>
</dbReference>
<dbReference type="Gene3D" id="1.10.8.480">
    <property type="match status" value="1"/>
</dbReference>
<dbReference type="Gene3D" id="3.40.50.150">
    <property type="entry name" value="Vaccinia Virus protein VP39"/>
    <property type="match status" value="1"/>
</dbReference>
<dbReference type="InterPro" id="IPR001737">
    <property type="entry name" value="KsgA/Erm"/>
</dbReference>
<dbReference type="InterPro" id="IPR020596">
    <property type="entry name" value="rRNA_Ade_Mease_Trfase_CS"/>
</dbReference>
<dbReference type="InterPro" id="IPR020598">
    <property type="entry name" value="rRNA_Ade_methylase_Trfase_N"/>
</dbReference>
<dbReference type="InterPro" id="IPR011530">
    <property type="entry name" value="rRNA_adenine_dimethylase"/>
</dbReference>
<dbReference type="InterPro" id="IPR029063">
    <property type="entry name" value="SAM-dependent_MTases_sf"/>
</dbReference>
<dbReference type="NCBIfam" id="TIGR00755">
    <property type="entry name" value="ksgA"/>
    <property type="match status" value="1"/>
</dbReference>
<dbReference type="PANTHER" id="PTHR11727">
    <property type="entry name" value="DIMETHYLADENOSINE TRANSFERASE"/>
    <property type="match status" value="1"/>
</dbReference>
<dbReference type="PANTHER" id="PTHR11727:SF7">
    <property type="entry name" value="DIMETHYLADENOSINE TRANSFERASE-RELATED"/>
    <property type="match status" value="1"/>
</dbReference>
<dbReference type="Pfam" id="PF00398">
    <property type="entry name" value="RrnaAD"/>
    <property type="match status" value="1"/>
</dbReference>
<dbReference type="SMART" id="SM00650">
    <property type="entry name" value="rADc"/>
    <property type="match status" value="1"/>
</dbReference>
<dbReference type="SUPFAM" id="SSF53335">
    <property type="entry name" value="S-adenosyl-L-methionine-dependent methyltransferases"/>
    <property type="match status" value="1"/>
</dbReference>
<dbReference type="PROSITE" id="PS01131">
    <property type="entry name" value="RRNA_A_DIMETH"/>
    <property type="match status" value="1"/>
</dbReference>
<dbReference type="PROSITE" id="PS51689">
    <property type="entry name" value="SAM_RNA_A_N6_MT"/>
    <property type="match status" value="1"/>
</dbReference>
<keyword id="KW-0489">Methyltransferase</keyword>
<keyword id="KW-1185">Reference proteome</keyword>
<keyword id="KW-0694">RNA-binding</keyword>
<keyword id="KW-0698">rRNA processing</keyword>
<keyword id="KW-0949">S-adenosyl-L-methionine</keyword>
<keyword id="KW-0808">Transferase</keyword>
<evidence type="ECO:0000255" key="1">
    <source>
        <dbReference type="PROSITE-ProRule" id="PRU01026"/>
    </source>
</evidence>
<accession>Q6FKY3</accession>
<name>DIM1_CANGA</name>
<organism>
    <name type="scientific">Candida glabrata (strain ATCC 2001 / BCRC 20586 / JCM 3761 / NBRC 0622 / NRRL Y-65 / CBS 138)</name>
    <name type="common">Yeast</name>
    <name type="synonym">Nakaseomyces glabratus</name>
    <dbReference type="NCBI Taxonomy" id="284593"/>
    <lineage>
        <taxon>Eukaryota</taxon>
        <taxon>Fungi</taxon>
        <taxon>Dikarya</taxon>
        <taxon>Ascomycota</taxon>
        <taxon>Saccharomycotina</taxon>
        <taxon>Saccharomycetes</taxon>
        <taxon>Saccharomycetales</taxon>
        <taxon>Saccharomycetaceae</taxon>
        <taxon>Nakaseomyces</taxon>
    </lineage>
</organism>
<sequence length="317" mass="35920">MAKADKKKYSGATTNKQVAAEKHLTSVFKFNTDLGQHILKNPLVAQGIVDKAQIKPSDIVLEVGPGTGNLTVRILEQARKVVAVEMDPRMAAELTKRVHGTPAEKKLEIMLGDFMKTELPYFDICISNTPYQISSPLVFKLINQPRPPRVSILMFQREFAMRLLARPGDSLYCRLSANVQMWANVTHIMKVGRNNFRPPPQVESSVVRIEIKNPRPQIDFNEWDGLLRIVFVRKNRTISAGFKSTTVLEILEKNYKTFLAINNQSIDETENLQSLIKQKIETVLKETGLAEKRAGKCDQTDFLKLLYAFHQVGIHFS</sequence>
<comment type="function">
    <text>Specifically dimethylates two adjacent adenosines in the loop of a conserved hairpin near the 3'-end of 18S rRNA in the 40S particle.</text>
</comment>
<comment type="catalytic activity">
    <reaction>
        <text>adenosine(1779)/adenosine(1780) in 18S rRNA + 4 S-adenosyl-L-methionine = N(6)-dimethyladenosine(1779)/N(6)-dimethyladenosine(1780) in 18S rRNA + 4 S-adenosyl-L-homocysteine + 4 H(+)</text>
        <dbReference type="Rhea" id="RHEA:42780"/>
        <dbReference type="Rhea" id="RHEA-COMP:10234"/>
        <dbReference type="Rhea" id="RHEA-COMP:10236"/>
        <dbReference type="ChEBI" id="CHEBI:15378"/>
        <dbReference type="ChEBI" id="CHEBI:57856"/>
        <dbReference type="ChEBI" id="CHEBI:59789"/>
        <dbReference type="ChEBI" id="CHEBI:74411"/>
        <dbReference type="ChEBI" id="CHEBI:74493"/>
        <dbReference type="EC" id="2.1.1.183"/>
    </reaction>
</comment>
<comment type="similarity">
    <text evidence="1">Belongs to the class I-like SAM-binding methyltransferase superfamily. rRNA adenine N(6)-methyltransferase family.</text>
</comment>
<feature type="chain" id="PRO_0000101459" description="Dimethyladenosine transferase">
    <location>
        <begin position="1"/>
        <end position="317"/>
    </location>
</feature>
<feature type="binding site" evidence="1">
    <location>
        <position position="37"/>
    </location>
    <ligand>
        <name>S-adenosyl-L-methionine</name>
        <dbReference type="ChEBI" id="CHEBI:59789"/>
    </ligand>
</feature>
<feature type="binding site" evidence="1">
    <location>
        <position position="39"/>
    </location>
    <ligand>
        <name>S-adenosyl-L-methionine</name>
        <dbReference type="ChEBI" id="CHEBI:59789"/>
    </ligand>
</feature>
<feature type="binding site" evidence="1">
    <location>
        <position position="64"/>
    </location>
    <ligand>
        <name>S-adenosyl-L-methionine</name>
        <dbReference type="ChEBI" id="CHEBI:59789"/>
    </ligand>
</feature>
<feature type="binding site" evidence="1">
    <location>
        <position position="85"/>
    </location>
    <ligand>
        <name>S-adenosyl-L-methionine</name>
        <dbReference type="ChEBI" id="CHEBI:59789"/>
    </ligand>
</feature>
<feature type="binding site" evidence="1">
    <location>
        <position position="113"/>
    </location>
    <ligand>
        <name>S-adenosyl-L-methionine</name>
        <dbReference type="ChEBI" id="CHEBI:59789"/>
    </ligand>
</feature>
<feature type="binding site" evidence="1">
    <location>
        <position position="128"/>
    </location>
    <ligand>
        <name>S-adenosyl-L-methionine</name>
        <dbReference type="ChEBI" id="CHEBI:59789"/>
    </ligand>
</feature>
<proteinExistence type="inferred from homology"/>
<reference key="1">
    <citation type="journal article" date="2004" name="Nature">
        <title>Genome evolution in yeasts.</title>
        <authorList>
            <person name="Dujon B."/>
            <person name="Sherman D."/>
            <person name="Fischer G."/>
            <person name="Durrens P."/>
            <person name="Casaregola S."/>
            <person name="Lafontaine I."/>
            <person name="de Montigny J."/>
            <person name="Marck C."/>
            <person name="Neuveglise C."/>
            <person name="Talla E."/>
            <person name="Goffard N."/>
            <person name="Frangeul L."/>
            <person name="Aigle M."/>
            <person name="Anthouard V."/>
            <person name="Babour A."/>
            <person name="Barbe V."/>
            <person name="Barnay S."/>
            <person name="Blanchin S."/>
            <person name="Beckerich J.-M."/>
            <person name="Beyne E."/>
            <person name="Bleykasten C."/>
            <person name="Boisrame A."/>
            <person name="Boyer J."/>
            <person name="Cattolico L."/>
            <person name="Confanioleri F."/>
            <person name="de Daruvar A."/>
            <person name="Despons L."/>
            <person name="Fabre E."/>
            <person name="Fairhead C."/>
            <person name="Ferry-Dumazet H."/>
            <person name="Groppi A."/>
            <person name="Hantraye F."/>
            <person name="Hennequin C."/>
            <person name="Jauniaux N."/>
            <person name="Joyet P."/>
            <person name="Kachouri R."/>
            <person name="Kerrest A."/>
            <person name="Koszul R."/>
            <person name="Lemaire M."/>
            <person name="Lesur I."/>
            <person name="Ma L."/>
            <person name="Muller H."/>
            <person name="Nicaud J.-M."/>
            <person name="Nikolski M."/>
            <person name="Oztas S."/>
            <person name="Ozier-Kalogeropoulos O."/>
            <person name="Pellenz S."/>
            <person name="Potier S."/>
            <person name="Richard G.-F."/>
            <person name="Straub M.-L."/>
            <person name="Suleau A."/>
            <person name="Swennen D."/>
            <person name="Tekaia F."/>
            <person name="Wesolowski-Louvel M."/>
            <person name="Westhof E."/>
            <person name="Wirth B."/>
            <person name="Zeniou-Meyer M."/>
            <person name="Zivanovic Y."/>
            <person name="Bolotin-Fukuhara M."/>
            <person name="Thierry A."/>
            <person name="Bouchier C."/>
            <person name="Caudron B."/>
            <person name="Scarpelli C."/>
            <person name="Gaillardin C."/>
            <person name="Weissenbach J."/>
            <person name="Wincker P."/>
            <person name="Souciet J.-L."/>
        </authorList>
    </citation>
    <scope>NUCLEOTIDE SEQUENCE [LARGE SCALE GENOMIC DNA]</scope>
    <source>
        <strain>ATCC 2001 / BCRC 20586 / JCM 3761 / NBRC 0622 / NRRL Y-65 / CBS 138</strain>
    </source>
</reference>
<gene>
    <name type="primary">DIM1</name>
    <name type="ordered locus">CAGL0L07678g</name>
</gene>
<protein>
    <recommendedName>
        <fullName>Dimethyladenosine transferase</fullName>
        <ecNumber>2.1.1.183</ecNumber>
    </recommendedName>
    <alternativeName>
        <fullName>18S rRNA (adenine(1779)-N(6)/adenine(1780)-N(6))-dimethyltransferase</fullName>
    </alternativeName>
    <alternativeName>
        <fullName>18S rRNA dimethylase</fullName>
    </alternativeName>
    <alternativeName>
        <fullName>S-adenosylmethionine-6-N', N'-adenosyl(rRNA) dimethyltransferase</fullName>
    </alternativeName>
</protein>